<name>SCP_HEDDI</name>
<feature type="chain" id="PRO_0000073628" description="Sarcoplasmic calcium-binding protein">
    <location>
        <begin position="1"/>
        <end position="174"/>
    </location>
</feature>
<feature type="domain" description="EF-hand 1" evidence="1">
    <location>
        <begin position="3"/>
        <end position="38"/>
    </location>
</feature>
<feature type="domain" description="EF-hand 2">
    <location>
        <begin position="55"/>
        <end position="90"/>
    </location>
</feature>
<feature type="domain" description="EF-hand 3" evidence="1">
    <location>
        <begin position="91"/>
        <end position="126"/>
    </location>
</feature>
<feature type="domain" description="EF-hand 4" evidence="1">
    <location>
        <begin position="127"/>
        <end position="160"/>
    </location>
</feature>
<feature type="binding site" evidence="1">
    <location>
        <position position="16"/>
    </location>
    <ligand>
        <name>Ca(2+)</name>
        <dbReference type="ChEBI" id="CHEBI:29108"/>
        <label>1</label>
    </ligand>
</feature>
<feature type="binding site" evidence="1">
    <location>
        <position position="18"/>
    </location>
    <ligand>
        <name>Ca(2+)</name>
        <dbReference type="ChEBI" id="CHEBI:29108"/>
        <label>1</label>
    </ligand>
</feature>
<feature type="binding site" evidence="1">
    <location>
        <position position="20"/>
    </location>
    <ligand>
        <name>Ca(2+)</name>
        <dbReference type="ChEBI" id="CHEBI:29108"/>
        <label>1</label>
    </ligand>
</feature>
<feature type="binding site" evidence="1">
    <location>
        <position position="27"/>
    </location>
    <ligand>
        <name>Ca(2+)</name>
        <dbReference type="ChEBI" id="CHEBI:29108"/>
        <label>1</label>
    </ligand>
</feature>
<feature type="binding site" evidence="1">
    <location>
        <position position="104"/>
    </location>
    <ligand>
        <name>Ca(2+)</name>
        <dbReference type="ChEBI" id="CHEBI:29108"/>
        <label>2</label>
    </ligand>
</feature>
<feature type="binding site" evidence="1">
    <location>
        <position position="106"/>
    </location>
    <ligand>
        <name>Ca(2+)</name>
        <dbReference type="ChEBI" id="CHEBI:29108"/>
        <label>2</label>
    </ligand>
</feature>
<feature type="binding site" evidence="1">
    <location>
        <position position="108"/>
    </location>
    <ligand>
        <name>Ca(2+)</name>
        <dbReference type="ChEBI" id="CHEBI:29108"/>
        <label>2</label>
    </ligand>
</feature>
<feature type="binding site" evidence="1">
    <location>
        <position position="110"/>
    </location>
    <ligand>
        <name>Ca(2+)</name>
        <dbReference type="ChEBI" id="CHEBI:29108"/>
        <label>2</label>
    </ligand>
</feature>
<feature type="binding site" evidence="1">
    <location>
        <position position="115"/>
    </location>
    <ligand>
        <name>Ca(2+)</name>
        <dbReference type="ChEBI" id="CHEBI:29108"/>
        <label>2</label>
    </ligand>
</feature>
<feature type="binding site" evidence="1">
    <location>
        <position position="138"/>
    </location>
    <ligand>
        <name>Ca(2+)</name>
        <dbReference type="ChEBI" id="CHEBI:29108"/>
        <label>3</label>
    </ligand>
</feature>
<feature type="binding site" evidence="1">
    <location>
        <position position="140"/>
    </location>
    <ligand>
        <name>Ca(2+)</name>
        <dbReference type="ChEBI" id="CHEBI:29108"/>
        <label>3</label>
    </ligand>
</feature>
<feature type="binding site" evidence="1">
    <location>
        <position position="142"/>
    </location>
    <ligand>
        <name>Ca(2+)</name>
        <dbReference type="ChEBI" id="CHEBI:29108"/>
        <label>3</label>
    </ligand>
</feature>
<feature type="binding site" evidence="1">
    <location>
        <position position="149"/>
    </location>
    <ligand>
        <name>Ca(2+)</name>
        <dbReference type="ChEBI" id="CHEBI:29108"/>
        <label>3</label>
    </ligand>
</feature>
<feature type="modified residue" description="N-acetylserine" evidence="2">
    <location>
        <position position="1"/>
    </location>
</feature>
<feature type="helix" evidence="4">
    <location>
        <begin position="2"/>
        <end position="15"/>
    </location>
</feature>
<feature type="strand" evidence="4">
    <location>
        <begin position="20"/>
        <end position="23"/>
    </location>
</feature>
<feature type="helix" evidence="4">
    <location>
        <begin position="25"/>
        <end position="38"/>
    </location>
</feature>
<feature type="helix" evidence="4">
    <location>
        <begin position="45"/>
        <end position="59"/>
    </location>
</feature>
<feature type="helix" evidence="4">
    <location>
        <begin position="61"/>
        <end position="63"/>
    </location>
</feature>
<feature type="turn" evidence="4">
    <location>
        <begin position="64"/>
        <end position="67"/>
    </location>
</feature>
<feature type="helix" evidence="4">
    <location>
        <begin position="72"/>
        <end position="82"/>
    </location>
</feature>
<feature type="helix" evidence="4">
    <location>
        <begin position="86"/>
        <end position="89"/>
    </location>
</feature>
<feature type="helix" evidence="4">
    <location>
        <begin position="90"/>
        <end position="93"/>
    </location>
</feature>
<feature type="helix" evidence="4">
    <location>
        <begin position="95"/>
        <end position="103"/>
    </location>
</feature>
<feature type="strand" evidence="4">
    <location>
        <begin position="108"/>
        <end position="112"/>
    </location>
</feature>
<feature type="helix" evidence="4">
    <location>
        <begin position="113"/>
        <end position="122"/>
    </location>
</feature>
<feature type="helix" evidence="4">
    <location>
        <begin position="127"/>
        <end position="129"/>
    </location>
</feature>
<feature type="helix" evidence="4">
    <location>
        <begin position="130"/>
        <end position="137"/>
    </location>
</feature>
<feature type="strand" evidence="4">
    <location>
        <begin position="142"/>
        <end position="145"/>
    </location>
</feature>
<feature type="helix" evidence="4">
    <location>
        <begin position="147"/>
        <end position="159"/>
    </location>
</feature>
<feature type="helix" evidence="4">
    <location>
        <begin position="165"/>
        <end position="168"/>
    </location>
</feature>
<feature type="strand" evidence="3">
    <location>
        <begin position="169"/>
        <end position="172"/>
    </location>
</feature>
<reference key="1">
    <citation type="journal article" date="1988" name="J. Biol. Chem.">
        <title>Amino acid sequence of a sarcoplasmic calcium-binding protein from the sandworm Nereis diversicolor.</title>
        <authorList>
            <person name="Collins J.H."/>
            <person name="Cox J.A."/>
            <person name="Theibert J.L."/>
        </authorList>
    </citation>
    <scope>PROTEIN SEQUENCE</scope>
    <scope>ACETYLATION AT SER-1</scope>
</reference>
<reference key="2">
    <citation type="journal article" date="1991" name="J. Biol. Chem.">
        <title>Three-dimensional structure of a sarcoplasmic calcium-binding protein from Nereis diversicolor.</title>
        <authorList>
            <person name="Cook W.J."/>
            <person name="Ealick S.E."/>
            <person name="Babu Y.S."/>
            <person name="Cox J.A."/>
            <person name="Vijay-Kumar S."/>
        </authorList>
    </citation>
    <scope>X-RAY CRYSTALLOGRAPHY (3.0 ANGSTROMS)</scope>
</reference>
<reference key="3">
    <citation type="journal article" date="1992" name="J. Mol. Biol.">
        <title>Structure of a sarcoplasmic calcium-binding protein from Nereis diversicolor refined at 2.0-A resolution.</title>
        <authorList>
            <person name="Vijay-Kumar S."/>
            <person name="Cook W.J."/>
        </authorList>
    </citation>
    <scope>X-RAY CRYSTALLOGRAPHY (2.0 ANGSTROMS)</scope>
</reference>
<reference key="4">
    <citation type="journal article" date="1996" name="FEBS Lett.">
        <title>Nereis sarcoplasmic Ca2+-binding protein has a highly unstructured apo state which is switched to the native state upon binding of the first Ca2+ ion.</title>
        <authorList>
            <person name="Precheur B."/>
            <person name="Cox J.A."/>
            <person name="Petrova T."/>
            <person name="Mispelter J."/>
            <person name="Craescu C.T."/>
        </authorList>
    </citation>
    <scope>STRUCTURE BY NMR</scope>
</reference>
<comment type="function">
    <text>Like parvalbumins, SCPs seem to be more abundant in fast contracting muscles, but no functional relationship can be established from this distribution.</text>
</comment>
<comment type="miscellaneous">
    <text>The sarcoplasmic calcium-binding proteins are abundant in the muscle of arthropods, mollusks, annelids, and protochordates.</text>
</comment>
<comment type="miscellaneous">
    <text>This protein has three functional calcium-binding sites; potential site 2 has lost affinity for calcium.</text>
</comment>
<sequence>SDLWVQKMKTYFNRIDFDKDGAITRMDFESMAERFAKESEMKAEHAKVLMDSLTGVWDNFLTAVAGGKGIDETTFINSMKEMVKNPEAKSVVEGPLPLFFRAVDTNEDNNISRDEYGIFFGMLGLDKTMAPASFDAIDTNNDGLLSLEEFVIAGSDFFMNDGDSTNKVFWGPLV</sequence>
<keyword id="KW-0002">3D-structure</keyword>
<keyword id="KW-0007">Acetylation</keyword>
<keyword id="KW-0106">Calcium</keyword>
<keyword id="KW-0903">Direct protein sequencing</keyword>
<keyword id="KW-0479">Metal-binding</keyword>
<keyword id="KW-0514">Muscle protein</keyword>
<keyword id="KW-0677">Repeat</keyword>
<organism>
    <name type="scientific">Hediste diversicolor</name>
    <name type="common">Sandworm</name>
    <name type="synonym">Nereis diversicolor</name>
    <dbReference type="NCBI Taxonomy" id="126592"/>
    <lineage>
        <taxon>Eukaryota</taxon>
        <taxon>Metazoa</taxon>
        <taxon>Spiralia</taxon>
        <taxon>Lophotrochozoa</taxon>
        <taxon>Annelida</taxon>
        <taxon>Polychaeta</taxon>
        <taxon>Errantia</taxon>
        <taxon>Phyllodocida</taxon>
        <taxon>Nereididae</taxon>
        <taxon>Hediste</taxon>
        <taxon>Hediste diversicolor species group</taxon>
    </lineage>
</organism>
<protein>
    <recommendedName>
        <fullName>Sarcoplasmic calcium-binding protein</fullName>
        <shortName>SCP</shortName>
    </recommendedName>
</protein>
<accession>P04571</accession>
<proteinExistence type="evidence at protein level"/>
<evidence type="ECO:0000255" key="1">
    <source>
        <dbReference type="PROSITE-ProRule" id="PRU00448"/>
    </source>
</evidence>
<evidence type="ECO:0000269" key="2">
    <source>
    </source>
</evidence>
<evidence type="ECO:0007829" key="3">
    <source>
        <dbReference type="PDB" id="1Q80"/>
    </source>
</evidence>
<evidence type="ECO:0007829" key="4">
    <source>
        <dbReference type="PDB" id="2SCP"/>
    </source>
</evidence>
<dbReference type="PIR" id="A31989">
    <property type="entry name" value="A31989"/>
</dbReference>
<dbReference type="PDB" id="1Q80">
    <property type="method" value="NMR"/>
    <property type="chains" value="A=1-174"/>
</dbReference>
<dbReference type="PDB" id="2SCP">
    <property type="method" value="X-ray"/>
    <property type="resolution" value="2.00 A"/>
    <property type="chains" value="A/B=1-174"/>
</dbReference>
<dbReference type="PDBsum" id="1Q80"/>
<dbReference type="PDBsum" id="2SCP"/>
<dbReference type="BMRB" id="P04571"/>
<dbReference type="SMR" id="P04571"/>
<dbReference type="iPTMnet" id="P04571"/>
<dbReference type="EvolutionaryTrace" id="P04571"/>
<dbReference type="GO" id="GO:0005509">
    <property type="term" value="F:calcium ion binding"/>
    <property type="evidence" value="ECO:0007669"/>
    <property type="project" value="InterPro"/>
</dbReference>
<dbReference type="CDD" id="cd00052">
    <property type="entry name" value="EH"/>
    <property type="match status" value="1"/>
</dbReference>
<dbReference type="Gene3D" id="1.10.238.10">
    <property type="entry name" value="EF-hand"/>
    <property type="match status" value="1"/>
</dbReference>
<dbReference type="InterPro" id="IPR011992">
    <property type="entry name" value="EF-hand-dom_pair"/>
</dbReference>
<dbReference type="InterPro" id="IPR018247">
    <property type="entry name" value="EF_Hand_1_Ca_BS"/>
</dbReference>
<dbReference type="InterPro" id="IPR002048">
    <property type="entry name" value="EF_hand_dom"/>
</dbReference>
<dbReference type="InterPro" id="IPR000261">
    <property type="entry name" value="EH_dom"/>
</dbReference>
<dbReference type="Pfam" id="PF13202">
    <property type="entry name" value="EF-hand_5"/>
    <property type="match status" value="3"/>
</dbReference>
<dbReference type="SMART" id="SM00054">
    <property type="entry name" value="EFh"/>
    <property type="match status" value="3"/>
</dbReference>
<dbReference type="SUPFAM" id="SSF47473">
    <property type="entry name" value="EF-hand"/>
    <property type="match status" value="1"/>
</dbReference>
<dbReference type="PROSITE" id="PS00018">
    <property type="entry name" value="EF_HAND_1"/>
    <property type="match status" value="3"/>
</dbReference>
<dbReference type="PROSITE" id="PS50222">
    <property type="entry name" value="EF_HAND_2"/>
    <property type="match status" value="3"/>
</dbReference>